<evidence type="ECO:0000255" key="1">
    <source>
        <dbReference type="HAMAP-Rule" id="MF_00752"/>
    </source>
</evidence>
<evidence type="ECO:0000305" key="2"/>
<geneLocation type="chloroplast"/>
<sequence>MATKTTVQKAIDTTSTVTPLGTLLKPLNSEYGKVSIGWGTTGVMAIFMSLFAVFLTIILEIYNGSLILTDVTLQ</sequence>
<reference key="1">
    <citation type="journal article" date="2007" name="Mol. Biol. Evol.">
        <title>The complete chloroplast genome of the chlorarachniophyte Bigelowiella natans: evidence for independent origins of chlorarachniophyte and euglenid secondary endosymbionts.</title>
        <authorList>
            <person name="Rogers M.B."/>
            <person name="Gilson P.R."/>
            <person name="Su V."/>
            <person name="McFadden G.I."/>
            <person name="Keeling P.J."/>
        </authorList>
    </citation>
    <scope>NUCLEOTIDE SEQUENCE [LARGE SCALE GENOMIC DNA]</scope>
</reference>
<feature type="chain" id="PRO_0000296328" description="Photosystem II reaction center protein H">
    <location>
        <begin position="1"/>
        <end position="74"/>
    </location>
</feature>
<feature type="transmembrane region" description="Helical" evidence="1">
    <location>
        <begin position="42"/>
        <end position="62"/>
    </location>
</feature>
<accession>Q06J21</accession>
<keyword id="KW-0150">Chloroplast</keyword>
<keyword id="KW-0472">Membrane</keyword>
<keyword id="KW-0602">Photosynthesis</keyword>
<keyword id="KW-0604">Photosystem II</keyword>
<keyword id="KW-0934">Plastid</keyword>
<keyword id="KW-0793">Thylakoid</keyword>
<keyword id="KW-0812">Transmembrane</keyword>
<keyword id="KW-1133">Transmembrane helix</keyword>
<organism>
    <name type="scientific">Bigelowiella natans</name>
    <name type="common">Pedinomonas minutissima</name>
    <name type="synonym">Chlorarachnion sp. (strain CCMP621)</name>
    <dbReference type="NCBI Taxonomy" id="227086"/>
    <lineage>
        <taxon>Eukaryota</taxon>
        <taxon>Sar</taxon>
        <taxon>Rhizaria</taxon>
        <taxon>Cercozoa</taxon>
        <taxon>Chlorarachniophyceae</taxon>
        <taxon>Bigelowiella</taxon>
    </lineage>
</organism>
<proteinExistence type="inferred from homology"/>
<name>PSBH_BIGNA</name>
<protein>
    <recommendedName>
        <fullName evidence="1">Photosystem II reaction center protein H</fullName>
        <shortName evidence="1">PSII-H</shortName>
    </recommendedName>
</protein>
<gene>
    <name evidence="1" type="primary">psbH</name>
</gene>
<comment type="function">
    <text evidence="1">One of the components of the core complex of photosystem II (PSII), required for its stability and/or assembly. PSII is a light-driven water:plastoquinone oxidoreductase that uses light energy to abstract electrons from H(2)O, generating O(2) and a proton gradient subsequently used for ATP formation. It consists of a core antenna complex that captures photons, and an electron transfer chain that converts photonic excitation into a charge separation.</text>
</comment>
<comment type="subunit">
    <text evidence="2">PSII is composed of 1 copy each of membrane proteins PsbA, PsbB, PsbC, PsbD, PsbE, PsbF, PsbH, PsbI, PsbJ, PsbK, PsbL, PsbM, PsbT, PsbY, PsbZ, Psb30/Ycf12, at least 3 peripheral proteins of the oxygen-evolving complex and a large number of cofactors. It forms dimeric complexes.</text>
</comment>
<comment type="subcellular location">
    <subcellularLocation>
        <location evidence="1">Plastid</location>
        <location evidence="1">Chloroplast thylakoid membrane</location>
        <topology evidence="1">Single-pass membrane protein</topology>
    </subcellularLocation>
</comment>
<comment type="similarity">
    <text evidence="1">Belongs to the PsbH family.</text>
</comment>
<dbReference type="EMBL" id="DQ851108">
    <property type="protein sequence ID" value="ABG91438.1"/>
    <property type="molecule type" value="Genomic_DNA"/>
</dbReference>
<dbReference type="RefSeq" id="YP_778606.1">
    <property type="nucleotide sequence ID" value="NC_008408.1"/>
</dbReference>
<dbReference type="SMR" id="Q06J21"/>
<dbReference type="GeneID" id="4353023"/>
<dbReference type="GO" id="GO:0009535">
    <property type="term" value="C:chloroplast thylakoid membrane"/>
    <property type="evidence" value="ECO:0007669"/>
    <property type="project" value="UniProtKB-SubCell"/>
</dbReference>
<dbReference type="GO" id="GO:0009523">
    <property type="term" value="C:photosystem II"/>
    <property type="evidence" value="ECO:0007669"/>
    <property type="project" value="UniProtKB-KW"/>
</dbReference>
<dbReference type="GO" id="GO:0042301">
    <property type="term" value="F:phosphate ion binding"/>
    <property type="evidence" value="ECO:0007669"/>
    <property type="project" value="InterPro"/>
</dbReference>
<dbReference type="GO" id="GO:0015979">
    <property type="term" value="P:photosynthesis"/>
    <property type="evidence" value="ECO:0007669"/>
    <property type="project" value="UniProtKB-UniRule"/>
</dbReference>
<dbReference type="GO" id="GO:0050821">
    <property type="term" value="P:protein stabilization"/>
    <property type="evidence" value="ECO:0007669"/>
    <property type="project" value="InterPro"/>
</dbReference>
<dbReference type="Gene3D" id="1.20.5.880">
    <property type="entry name" value="Photosystem II reaction center protein H"/>
    <property type="match status" value="1"/>
</dbReference>
<dbReference type="HAMAP" id="MF_00752">
    <property type="entry name" value="PSII_PsbH"/>
    <property type="match status" value="1"/>
</dbReference>
<dbReference type="InterPro" id="IPR001056">
    <property type="entry name" value="PSII_PsbH"/>
</dbReference>
<dbReference type="InterPro" id="IPR036863">
    <property type="entry name" value="PSII_PsbH_sf"/>
</dbReference>
<dbReference type="NCBIfam" id="NF002728">
    <property type="entry name" value="PRK02624.1"/>
    <property type="match status" value="1"/>
</dbReference>
<dbReference type="PANTHER" id="PTHR34469">
    <property type="entry name" value="PHOTOSYSTEM II REACTION CENTER PROTEIN H"/>
    <property type="match status" value="1"/>
</dbReference>
<dbReference type="PANTHER" id="PTHR34469:SF4">
    <property type="entry name" value="PHOTOSYSTEM II REACTION CENTER PROTEIN H"/>
    <property type="match status" value="1"/>
</dbReference>
<dbReference type="Pfam" id="PF00737">
    <property type="entry name" value="PsbH"/>
    <property type="match status" value="1"/>
</dbReference>
<dbReference type="SUPFAM" id="SSF161025">
    <property type="entry name" value="Photosystem II 10 kDa phosphoprotein PsbH"/>
    <property type="match status" value="1"/>
</dbReference>